<accession>C4L618</accession>
<evidence type="ECO:0000255" key="1">
    <source>
        <dbReference type="HAMAP-Rule" id="MF_00621"/>
    </source>
</evidence>
<sequence>MNLLEKTRQLNTMLQQEASAHVDFKEMADKMREVLESNTFIVSRRGRLLGFAIKQQIENDRMKAFLVDRQFPEPYASNLFNVKETTANIDIDSEYTAFPVENHDLFLNSKTTIVPIIGGGERLGTLVLGRLANEFTEDDLVLAEYSATVVGMEILREKAAEAETSARKKAVVQMAINSLSYSELEAIEHIFEELGGNEGLLVASKIADRVGITRSVIVNALRKLESAGVIESRSLGMKGTYIKILNDNFLFELQKLKSN</sequence>
<proteinExistence type="inferred from homology"/>
<feature type="chain" id="PRO_1000212285" description="Global transcriptional regulator CodY">
    <location>
        <begin position="1"/>
        <end position="259"/>
    </location>
</feature>
<feature type="DNA-binding region" description="H-T-H motif" evidence="1">
    <location>
        <begin position="203"/>
        <end position="222"/>
    </location>
</feature>
<feature type="region of interest" description="GAF domain" evidence="1">
    <location>
        <begin position="1"/>
        <end position="155"/>
    </location>
</feature>
<gene>
    <name evidence="1" type="primary">codY</name>
    <name type="ordered locus">EAT1b_2910</name>
</gene>
<organism>
    <name type="scientific">Exiguobacterium sp. (strain ATCC BAA-1283 / AT1b)</name>
    <dbReference type="NCBI Taxonomy" id="360911"/>
    <lineage>
        <taxon>Bacteria</taxon>
        <taxon>Bacillati</taxon>
        <taxon>Bacillota</taxon>
        <taxon>Bacilli</taxon>
        <taxon>Bacillales</taxon>
        <taxon>Bacillales Family XII. Incertae Sedis</taxon>
        <taxon>Exiguobacterium</taxon>
    </lineage>
</organism>
<comment type="function">
    <text evidence="1">DNA-binding global transcriptional regulator which is involved in the adaptive response to starvation and acts by directly or indirectly controlling the expression of numerous genes in response to nutrient availability. During rapid exponential growth, CodY is highly active and represses genes whose products allow adaptation to nutrient depletion.</text>
</comment>
<comment type="subcellular location">
    <subcellularLocation>
        <location evidence="1">Cytoplasm</location>
    </subcellularLocation>
</comment>
<comment type="similarity">
    <text evidence="1">Belongs to the CodY family.</text>
</comment>
<keyword id="KW-0963">Cytoplasm</keyword>
<keyword id="KW-0238">DNA-binding</keyword>
<keyword id="KW-0678">Repressor</keyword>
<keyword id="KW-0804">Transcription</keyword>
<keyword id="KW-0805">Transcription regulation</keyword>
<protein>
    <recommendedName>
        <fullName evidence="1">Global transcriptional regulator CodY</fullName>
    </recommendedName>
</protein>
<reference key="1">
    <citation type="journal article" date="2011" name="J. Bacteriol.">
        <title>Complete genome sequence of the Thermophilic Bacterium Exiguobacterium sp. AT1b.</title>
        <authorList>
            <person name="Vishnivetskaya T.A."/>
            <person name="Lucas S."/>
            <person name="Copeland A."/>
            <person name="Lapidus A."/>
            <person name="Glavina del Rio T."/>
            <person name="Dalin E."/>
            <person name="Tice H."/>
            <person name="Bruce D.C."/>
            <person name="Goodwin L.A."/>
            <person name="Pitluck S."/>
            <person name="Saunders E."/>
            <person name="Brettin T."/>
            <person name="Detter C."/>
            <person name="Han C."/>
            <person name="Larimer F."/>
            <person name="Land M.L."/>
            <person name="Hauser L.J."/>
            <person name="Kyrpides N.C."/>
            <person name="Ovchinnikova G."/>
            <person name="Kathariou S."/>
            <person name="Ramaley R.F."/>
            <person name="Rodrigues D.F."/>
            <person name="Hendrix C."/>
            <person name="Richardson P."/>
            <person name="Tiedje J.M."/>
        </authorList>
    </citation>
    <scope>NUCLEOTIDE SEQUENCE [LARGE SCALE GENOMIC DNA]</scope>
    <source>
        <strain>ATCC BAA-1283 / AT1b</strain>
    </source>
</reference>
<dbReference type="EMBL" id="CP001615">
    <property type="protein sequence ID" value="ACQ71824.1"/>
    <property type="molecule type" value="Genomic_DNA"/>
</dbReference>
<dbReference type="RefSeq" id="WP_015881383.1">
    <property type="nucleotide sequence ID" value="NC_012673.1"/>
</dbReference>
<dbReference type="SMR" id="C4L618"/>
<dbReference type="STRING" id="360911.EAT1b_2910"/>
<dbReference type="KEGG" id="eat:EAT1b_2910"/>
<dbReference type="eggNOG" id="COG4465">
    <property type="taxonomic scope" value="Bacteria"/>
</dbReference>
<dbReference type="HOGENOM" id="CLU_089581_0_0_9"/>
<dbReference type="OrthoDB" id="2056at2"/>
<dbReference type="Proteomes" id="UP000000716">
    <property type="component" value="Chromosome"/>
</dbReference>
<dbReference type="GO" id="GO:0005737">
    <property type="term" value="C:cytoplasm"/>
    <property type="evidence" value="ECO:0007669"/>
    <property type="project" value="UniProtKB-SubCell"/>
</dbReference>
<dbReference type="GO" id="GO:0003677">
    <property type="term" value="F:DNA binding"/>
    <property type="evidence" value="ECO:0007669"/>
    <property type="project" value="UniProtKB-UniRule"/>
</dbReference>
<dbReference type="GO" id="GO:0003700">
    <property type="term" value="F:DNA-binding transcription factor activity"/>
    <property type="evidence" value="ECO:0007669"/>
    <property type="project" value="InterPro"/>
</dbReference>
<dbReference type="GO" id="GO:0005525">
    <property type="term" value="F:GTP binding"/>
    <property type="evidence" value="ECO:0007669"/>
    <property type="project" value="InterPro"/>
</dbReference>
<dbReference type="GO" id="GO:0045892">
    <property type="term" value="P:negative regulation of DNA-templated transcription"/>
    <property type="evidence" value="ECO:0007669"/>
    <property type="project" value="UniProtKB-UniRule"/>
</dbReference>
<dbReference type="FunFam" id="1.10.10.10:FF:000034">
    <property type="entry name" value="GTP-sensing transcriptional pleiotropic repressor CodY"/>
    <property type="match status" value="1"/>
</dbReference>
<dbReference type="FunFam" id="3.30.450.40:FF:000003">
    <property type="entry name" value="GTP-sensing transcriptional pleiotropic repressor CodY"/>
    <property type="match status" value="1"/>
</dbReference>
<dbReference type="Gene3D" id="3.30.450.40">
    <property type="match status" value="1"/>
</dbReference>
<dbReference type="Gene3D" id="1.10.10.10">
    <property type="entry name" value="Winged helix-like DNA-binding domain superfamily/Winged helix DNA-binding domain"/>
    <property type="match status" value="1"/>
</dbReference>
<dbReference type="HAMAP" id="MF_00621">
    <property type="entry name" value="HTH_type_CodY"/>
    <property type="match status" value="1"/>
</dbReference>
<dbReference type="InterPro" id="IPR014154">
    <property type="entry name" value="CodY"/>
</dbReference>
<dbReference type="InterPro" id="IPR029016">
    <property type="entry name" value="GAF-like_dom_sf"/>
</dbReference>
<dbReference type="InterPro" id="IPR013198">
    <property type="entry name" value="GTP_trans_reg_CodY_C"/>
</dbReference>
<dbReference type="InterPro" id="IPR010312">
    <property type="entry name" value="Transc_reg_CodY_N"/>
</dbReference>
<dbReference type="InterPro" id="IPR036388">
    <property type="entry name" value="WH-like_DNA-bd_sf"/>
</dbReference>
<dbReference type="InterPro" id="IPR036390">
    <property type="entry name" value="WH_DNA-bd_sf"/>
</dbReference>
<dbReference type="NCBIfam" id="TIGR02787">
    <property type="entry name" value="codY_Gpos"/>
    <property type="match status" value="1"/>
</dbReference>
<dbReference type="NCBIfam" id="NF003170">
    <property type="entry name" value="PRK04158.1"/>
    <property type="match status" value="1"/>
</dbReference>
<dbReference type="PANTHER" id="PTHR40062:SF1">
    <property type="entry name" value="GLOBAL TRANSCRIPTIONAL REGULATOR CODY"/>
    <property type="match status" value="1"/>
</dbReference>
<dbReference type="PANTHER" id="PTHR40062">
    <property type="entry name" value="GTP-SENSING TRANSCRIPTIONAL PLEIOTROPIC REPRESSOR CODY"/>
    <property type="match status" value="1"/>
</dbReference>
<dbReference type="Pfam" id="PF06018">
    <property type="entry name" value="CodY"/>
    <property type="match status" value="1"/>
</dbReference>
<dbReference type="Pfam" id="PF08222">
    <property type="entry name" value="HTH_CodY"/>
    <property type="match status" value="1"/>
</dbReference>
<dbReference type="PIRSF" id="PIRSF011572">
    <property type="entry name" value="GTP_sensing_CodY"/>
    <property type="match status" value="1"/>
</dbReference>
<dbReference type="SUPFAM" id="SSF55781">
    <property type="entry name" value="GAF domain-like"/>
    <property type="match status" value="1"/>
</dbReference>
<dbReference type="SUPFAM" id="SSF46785">
    <property type="entry name" value="Winged helix' DNA-binding domain"/>
    <property type="match status" value="1"/>
</dbReference>
<name>CODY_EXISA</name>